<keyword id="KW-0010">Activator</keyword>
<keyword id="KW-0238">DNA-binding</keyword>
<keyword id="KW-1185">Reference proteome</keyword>
<keyword id="KW-0678">Repressor</keyword>
<keyword id="KW-0804">Transcription</keyword>
<keyword id="KW-0805">Transcription regulation</keyword>
<gene>
    <name evidence="1" type="primary">sgrR</name>
    <name type="ordered locus">c0085</name>
</gene>
<dbReference type="EMBL" id="AE014075">
    <property type="protein sequence ID" value="AAN78581.1"/>
    <property type="status" value="ALT_INIT"/>
    <property type="molecule type" value="Genomic_DNA"/>
</dbReference>
<dbReference type="RefSeq" id="WP_001314420.1">
    <property type="nucleotide sequence ID" value="NZ_CP051263.1"/>
</dbReference>
<dbReference type="SMR" id="Q8FL80"/>
<dbReference type="STRING" id="199310.c0085"/>
<dbReference type="KEGG" id="ecc:c0085"/>
<dbReference type="eggNOG" id="COG4533">
    <property type="taxonomic scope" value="Bacteria"/>
</dbReference>
<dbReference type="HOGENOM" id="CLU_017028_12_3_6"/>
<dbReference type="Proteomes" id="UP000001410">
    <property type="component" value="Chromosome"/>
</dbReference>
<dbReference type="GO" id="GO:0003677">
    <property type="term" value="F:DNA binding"/>
    <property type="evidence" value="ECO:0007669"/>
    <property type="project" value="UniProtKB-KW"/>
</dbReference>
<dbReference type="GO" id="GO:1904680">
    <property type="term" value="F:peptide transmembrane transporter activity"/>
    <property type="evidence" value="ECO:0007669"/>
    <property type="project" value="TreeGrafter"/>
</dbReference>
<dbReference type="GO" id="GO:0045892">
    <property type="term" value="P:negative regulation of DNA-templated transcription"/>
    <property type="evidence" value="ECO:0007669"/>
    <property type="project" value="UniProtKB-UniRule"/>
</dbReference>
<dbReference type="GO" id="GO:0015833">
    <property type="term" value="P:peptide transport"/>
    <property type="evidence" value="ECO:0007669"/>
    <property type="project" value="TreeGrafter"/>
</dbReference>
<dbReference type="GO" id="GO:0045893">
    <property type="term" value="P:positive regulation of DNA-templated transcription"/>
    <property type="evidence" value="ECO:0007669"/>
    <property type="project" value="UniProtKB-UniRule"/>
</dbReference>
<dbReference type="CDD" id="cd08507">
    <property type="entry name" value="PBP2_SgrR_like"/>
    <property type="match status" value="1"/>
</dbReference>
<dbReference type="FunFam" id="3.40.190.10:FF:000070">
    <property type="entry name" value="HTH-type transcriptional regulator SgrR"/>
    <property type="match status" value="1"/>
</dbReference>
<dbReference type="Gene3D" id="3.40.190.10">
    <property type="entry name" value="Periplasmic binding protein-like II"/>
    <property type="match status" value="1"/>
</dbReference>
<dbReference type="HAMAP" id="MF_01449">
    <property type="entry name" value="HTH_type_SgrR"/>
    <property type="match status" value="1"/>
</dbReference>
<dbReference type="InterPro" id="IPR039424">
    <property type="entry name" value="SBP_5"/>
</dbReference>
<dbReference type="InterPro" id="IPR000914">
    <property type="entry name" value="SBP_5_dom"/>
</dbReference>
<dbReference type="InterPro" id="IPR025370">
    <property type="entry name" value="SgrR_HTH_N"/>
</dbReference>
<dbReference type="InterPro" id="IPR023767">
    <property type="entry name" value="Tscrpt_reg_SgrR"/>
</dbReference>
<dbReference type="NCBIfam" id="NF010149">
    <property type="entry name" value="PRK13626.1"/>
    <property type="match status" value="1"/>
</dbReference>
<dbReference type="PANTHER" id="PTHR30290:SF72">
    <property type="entry name" value="HTH-TYPE TRANSCRIPTIONAL REGULATOR SGRR"/>
    <property type="match status" value="1"/>
</dbReference>
<dbReference type="PANTHER" id="PTHR30290">
    <property type="entry name" value="PERIPLASMIC BINDING COMPONENT OF ABC TRANSPORTER"/>
    <property type="match status" value="1"/>
</dbReference>
<dbReference type="Pfam" id="PF00496">
    <property type="entry name" value="SBP_bac_5"/>
    <property type="match status" value="1"/>
</dbReference>
<dbReference type="Pfam" id="PF12793">
    <property type="entry name" value="SgrR_N"/>
    <property type="match status" value="1"/>
</dbReference>
<dbReference type="SUPFAM" id="SSF53850">
    <property type="entry name" value="Periplasmic binding protein-like II"/>
    <property type="match status" value="1"/>
</dbReference>
<comment type="function">
    <text evidence="1">Activates the small RNA gene sgrS under glucose-phosphate stress conditions as well as yfdZ. Represses its own transcription under both stress and non-stress conditions. Might act as a sensor of the intracellular accumulation of phosphoglucose by binding these molecules in its C-terminal solute-binding domain.</text>
</comment>
<comment type="sequence caution" evidence="2">
    <conflict type="erroneous initiation">
        <sequence resource="EMBL-CDS" id="AAN78581"/>
    </conflict>
</comment>
<proteinExistence type="inferred from homology"/>
<organism>
    <name type="scientific">Escherichia coli O6:H1 (strain CFT073 / ATCC 700928 / UPEC)</name>
    <dbReference type="NCBI Taxonomy" id="199310"/>
    <lineage>
        <taxon>Bacteria</taxon>
        <taxon>Pseudomonadati</taxon>
        <taxon>Pseudomonadota</taxon>
        <taxon>Gammaproteobacteria</taxon>
        <taxon>Enterobacterales</taxon>
        <taxon>Enterobacteriaceae</taxon>
        <taxon>Escherichia</taxon>
    </lineage>
</organism>
<name>SGRR_ECOL6</name>
<evidence type="ECO:0000255" key="1">
    <source>
        <dbReference type="HAMAP-Rule" id="MF_01449"/>
    </source>
</evidence>
<evidence type="ECO:0000305" key="2"/>
<feature type="chain" id="PRO_0000309244" description="HTH-type transcriptional regulator SgrR">
    <location>
        <begin position="1"/>
        <end position="551"/>
    </location>
</feature>
<feature type="domain" description="HTH marR-type" evidence="1">
    <location>
        <begin position="1"/>
        <end position="116"/>
    </location>
</feature>
<feature type="DNA-binding region" description="H-T-H motif" evidence="1">
    <location>
        <begin position="26"/>
        <end position="49"/>
    </location>
</feature>
<feature type="region of interest" description="Solute-binding" evidence="1">
    <location>
        <begin position="163"/>
        <end position="492"/>
    </location>
</feature>
<reference key="1">
    <citation type="journal article" date="2002" name="Proc. Natl. Acad. Sci. U.S.A.">
        <title>Extensive mosaic structure revealed by the complete genome sequence of uropathogenic Escherichia coli.</title>
        <authorList>
            <person name="Welch R.A."/>
            <person name="Burland V."/>
            <person name="Plunkett G. III"/>
            <person name="Redford P."/>
            <person name="Roesch P."/>
            <person name="Rasko D."/>
            <person name="Buckles E.L."/>
            <person name="Liou S.-R."/>
            <person name="Boutin A."/>
            <person name="Hackett J."/>
            <person name="Stroud D."/>
            <person name="Mayhew G.F."/>
            <person name="Rose D.J."/>
            <person name="Zhou S."/>
            <person name="Schwartz D.C."/>
            <person name="Perna N.T."/>
            <person name="Mobley H.L.T."/>
            <person name="Donnenberg M.S."/>
            <person name="Blattner F.R."/>
        </authorList>
    </citation>
    <scope>NUCLEOTIDE SEQUENCE [LARGE SCALE GENOMIC DNA]</scope>
    <source>
        <strain>CFT073 / ATCC 700928 / UPEC</strain>
    </source>
</reference>
<protein>
    <recommendedName>
        <fullName evidence="1">HTH-type transcriptional regulator SgrR</fullName>
    </recommendedName>
</protein>
<accession>Q8FL80</accession>
<sequence length="551" mass="64003">MPSARLQQQFIRLWQCCEGKSQETTLNELAALLSCSRRHMRTLLNTMQDRGWLTWEAEVGRGKRSRLTFLYTGLALQQQRAEDLLEQDRIDQLVQLVGDKATVRQMLVSHLGRSFRQGRHILRVLYYRPLRNLLPGSALRRSETHIARQIFSSLTRINEENGELEADIAHHWQQISPLHWRFFLRPGVHFHHGRELEMDDVIASLKRINTLPLYSHIANIVSPTPWTLDIHLTQPDRWLPLLLGQVPAMILPREWETLSNFASHPIGTGPYAVIRNSTNQLKIQAFDDFFGYRALIDEVNVWVLPEIADEPAGGLMLKGPQGEEKEIESRLEEGCYYLLFDSRTHRGANQQVRDWVSYVLSPTNLVYFAEEQYQQLWFPAYGLLPRWHHARTIKSEKPAGLESLTLTFYQDHSEHRVIAGIMQQILASHQVTLEIKEISYDQWHEGEIESDIWLNSANFTLPLDFSLFAHLCEVPLLQHCIPIDWQADAARWRNGEMNLANWCQQLVASKAMVPLIHHWLIIQGQRSMRGLRMNTLGWFDFKSAWFAPPDP</sequence>